<gene>
    <name evidence="1" type="primary">prfA</name>
    <name type="ordered locus">Pnec_0148</name>
</gene>
<protein>
    <recommendedName>
        <fullName evidence="1">Peptide chain release factor 1</fullName>
        <shortName evidence="1">RF-1</shortName>
    </recommendedName>
</protein>
<accession>B1XSY0</accession>
<name>RF1_POLNS</name>
<dbReference type="EMBL" id="CP001010">
    <property type="protein sequence ID" value="ACB43457.1"/>
    <property type="molecule type" value="Genomic_DNA"/>
</dbReference>
<dbReference type="SMR" id="B1XSY0"/>
<dbReference type="STRING" id="452638.Pnec_0148"/>
<dbReference type="KEGG" id="pne:Pnec_0148"/>
<dbReference type="eggNOG" id="COG0216">
    <property type="taxonomic scope" value="Bacteria"/>
</dbReference>
<dbReference type="HOGENOM" id="CLU_036856_0_1_4"/>
<dbReference type="OrthoDB" id="9806673at2"/>
<dbReference type="GO" id="GO:0005737">
    <property type="term" value="C:cytoplasm"/>
    <property type="evidence" value="ECO:0007669"/>
    <property type="project" value="UniProtKB-SubCell"/>
</dbReference>
<dbReference type="GO" id="GO:0016149">
    <property type="term" value="F:translation release factor activity, codon specific"/>
    <property type="evidence" value="ECO:0007669"/>
    <property type="project" value="UniProtKB-UniRule"/>
</dbReference>
<dbReference type="FunFam" id="3.30.160.20:FF:000004">
    <property type="entry name" value="Peptide chain release factor 1"/>
    <property type="match status" value="1"/>
</dbReference>
<dbReference type="FunFam" id="3.30.70.1660:FF:000002">
    <property type="entry name" value="Peptide chain release factor 1"/>
    <property type="match status" value="1"/>
</dbReference>
<dbReference type="FunFam" id="3.30.70.1660:FF:000004">
    <property type="entry name" value="Peptide chain release factor 1"/>
    <property type="match status" value="1"/>
</dbReference>
<dbReference type="Gene3D" id="3.30.160.20">
    <property type="match status" value="1"/>
</dbReference>
<dbReference type="Gene3D" id="3.30.70.1660">
    <property type="match status" value="2"/>
</dbReference>
<dbReference type="Gene3D" id="6.10.140.1950">
    <property type="match status" value="1"/>
</dbReference>
<dbReference type="HAMAP" id="MF_00093">
    <property type="entry name" value="Rel_fac_1"/>
    <property type="match status" value="1"/>
</dbReference>
<dbReference type="InterPro" id="IPR005139">
    <property type="entry name" value="PCRF"/>
</dbReference>
<dbReference type="InterPro" id="IPR000352">
    <property type="entry name" value="Pep_chain_release_fac_I"/>
</dbReference>
<dbReference type="InterPro" id="IPR045853">
    <property type="entry name" value="Pep_chain_release_fac_I_sf"/>
</dbReference>
<dbReference type="InterPro" id="IPR050057">
    <property type="entry name" value="Prokaryotic/Mito_RF"/>
</dbReference>
<dbReference type="InterPro" id="IPR004373">
    <property type="entry name" value="RF-1"/>
</dbReference>
<dbReference type="NCBIfam" id="TIGR00019">
    <property type="entry name" value="prfA"/>
    <property type="match status" value="1"/>
</dbReference>
<dbReference type="NCBIfam" id="NF001859">
    <property type="entry name" value="PRK00591.1"/>
    <property type="match status" value="1"/>
</dbReference>
<dbReference type="PANTHER" id="PTHR43804">
    <property type="entry name" value="LD18447P"/>
    <property type="match status" value="1"/>
</dbReference>
<dbReference type="PANTHER" id="PTHR43804:SF7">
    <property type="entry name" value="LD18447P"/>
    <property type="match status" value="1"/>
</dbReference>
<dbReference type="Pfam" id="PF03462">
    <property type="entry name" value="PCRF"/>
    <property type="match status" value="1"/>
</dbReference>
<dbReference type="Pfam" id="PF00472">
    <property type="entry name" value="RF-1"/>
    <property type="match status" value="1"/>
</dbReference>
<dbReference type="SMART" id="SM00937">
    <property type="entry name" value="PCRF"/>
    <property type="match status" value="1"/>
</dbReference>
<dbReference type="SUPFAM" id="SSF75620">
    <property type="entry name" value="Release factor"/>
    <property type="match status" value="1"/>
</dbReference>
<dbReference type="PROSITE" id="PS00745">
    <property type="entry name" value="RF_PROK_I"/>
    <property type="match status" value="1"/>
</dbReference>
<comment type="function">
    <text evidence="1">Peptide chain release factor 1 directs the termination of translation in response to the peptide chain termination codons UAG and UAA.</text>
</comment>
<comment type="subcellular location">
    <subcellularLocation>
        <location evidence="1">Cytoplasm</location>
    </subcellularLocation>
</comment>
<comment type="PTM">
    <text evidence="1">Methylated by PrmC. Methylation increases the termination efficiency of RF1.</text>
</comment>
<comment type="similarity">
    <text evidence="1">Belongs to the prokaryotic/mitochondrial release factor family.</text>
</comment>
<evidence type="ECO:0000255" key="1">
    <source>
        <dbReference type="HAMAP-Rule" id="MF_00093"/>
    </source>
</evidence>
<proteinExistence type="inferred from homology"/>
<feature type="chain" id="PRO_1000093484" description="Peptide chain release factor 1">
    <location>
        <begin position="1"/>
        <end position="359"/>
    </location>
</feature>
<feature type="modified residue" description="N5-methylglutamine" evidence="1">
    <location>
        <position position="235"/>
    </location>
</feature>
<organism>
    <name type="scientific">Polynucleobacter necessarius subsp. necessarius (strain STIR1)</name>
    <dbReference type="NCBI Taxonomy" id="452638"/>
    <lineage>
        <taxon>Bacteria</taxon>
        <taxon>Pseudomonadati</taxon>
        <taxon>Pseudomonadota</taxon>
        <taxon>Betaproteobacteria</taxon>
        <taxon>Burkholderiales</taxon>
        <taxon>Burkholderiaceae</taxon>
        <taxon>Polynucleobacter</taxon>
    </lineage>
</organism>
<reference key="1">
    <citation type="journal article" date="2013" name="Proc. Natl. Acad. Sci. U.S.A.">
        <title>Polynucleobacter necessarius, a model for genome reduction in both free-living and symbiotic bacteria.</title>
        <authorList>
            <person name="Boscaro V."/>
            <person name="Felletti M."/>
            <person name="Vannini C."/>
            <person name="Ackerman M.S."/>
            <person name="Chain P.S."/>
            <person name="Malfatti S."/>
            <person name="Vergez L.M."/>
            <person name="Shin M."/>
            <person name="Doak T.G."/>
            <person name="Lynch M."/>
            <person name="Petroni G."/>
        </authorList>
    </citation>
    <scope>NUCLEOTIDE SEQUENCE [LARGE SCALE GENOMIC DNA]</scope>
    <source>
        <strain>STIR1</strain>
    </source>
</reference>
<keyword id="KW-0963">Cytoplasm</keyword>
<keyword id="KW-0488">Methylation</keyword>
<keyword id="KW-0648">Protein biosynthesis</keyword>
<sequence length="359" mass="40419">MKPSMRAKLDHLDTRLAELNSLLTSEEATKDMDAYRKLTREHSDIATVVEQFYLYKQAEADAQAAEEMRKDPEMKEFADEEQKQALATMEALESTLQKLLLPKDENDERNVFLEIRAGTGGDEGALFAGDLLRMYTRFAERQGWKVEVVSAAESDLGGYKEVVLRLVGQAVYSRLKFESGGHRVQRVPQTETQGRIHTSACTVAVMPETDELEAVKINPAELRIDTFRASGAGGQHINKTDSAIRITHLPTGTVVECQDDRSQHRNREQAMKVLVSRIMDAREREKHQLEAQTRKSLVGTGDRSDRIRTYNFPQGRITDHRINLTLYKIDAMMDGDIDDLCNALASEHQAELLAALGDN</sequence>